<comment type="function">
    <text evidence="1">An essential cysteine protease that cleaves the N-terminus from ribosomal protein bL27.</text>
</comment>
<comment type="subunit">
    <text evidence="2">Homodimer (PubMed:25664743).</text>
</comment>
<comment type="similarity">
    <text evidence="3">Belongs to the Prp family.</text>
</comment>
<evidence type="ECO:0000250" key="1">
    <source>
        <dbReference type="UniProtKB" id="Q2FXS9"/>
    </source>
</evidence>
<evidence type="ECO:0000269" key="2">
    <source>
    </source>
</evidence>
<evidence type="ECO:0000305" key="3"/>
<evidence type="ECO:0000312" key="4">
    <source>
        <dbReference type="EMBL" id="BAB57808.2"/>
    </source>
</evidence>
<evidence type="ECO:0007829" key="5">
    <source>
        <dbReference type="PDB" id="4PEO"/>
    </source>
</evidence>
<accession>A0A0H3JSM9</accession>
<name>PRP_STAAM</name>
<gene>
    <name evidence="1" type="primary">prp</name>
    <name evidence="4" type="ordered locus">SAV1646</name>
</gene>
<organism>
    <name type="scientific">Staphylococcus aureus (strain Mu50 / ATCC 700699)</name>
    <dbReference type="NCBI Taxonomy" id="158878"/>
    <lineage>
        <taxon>Bacteria</taxon>
        <taxon>Bacillati</taxon>
        <taxon>Bacillota</taxon>
        <taxon>Bacilli</taxon>
        <taxon>Bacillales</taxon>
        <taxon>Staphylococcaceae</taxon>
        <taxon>Staphylococcus</taxon>
    </lineage>
</organism>
<dbReference type="EC" id="3.4.22.-" evidence="1"/>
<dbReference type="EMBL" id="BA000017">
    <property type="protein sequence ID" value="BAB57808.2"/>
    <property type="molecule type" value="Genomic_DNA"/>
</dbReference>
<dbReference type="RefSeq" id="WP_000633692.1">
    <property type="nucleotide sequence ID" value="NC_002758.2"/>
</dbReference>
<dbReference type="PDB" id="4PEO">
    <property type="method" value="X-ray"/>
    <property type="resolution" value="1.73 A"/>
    <property type="chains" value="A/B=1-106"/>
</dbReference>
<dbReference type="PDBsum" id="4PEO"/>
<dbReference type="SMR" id="A0A0H3JSM9"/>
<dbReference type="KEGG" id="sav:SAV1646"/>
<dbReference type="HOGENOM" id="CLU_140910_1_0_9"/>
<dbReference type="PhylomeDB" id="A0A0H3JSM9"/>
<dbReference type="Proteomes" id="UP000002481">
    <property type="component" value="Chromosome"/>
</dbReference>
<dbReference type="GO" id="GO:0008234">
    <property type="term" value="F:cysteine-type peptidase activity"/>
    <property type="evidence" value="ECO:0007669"/>
    <property type="project" value="UniProtKB-KW"/>
</dbReference>
<dbReference type="GO" id="GO:0006508">
    <property type="term" value="P:proteolysis"/>
    <property type="evidence" value="ECO:0007669"/>
    <property type="project" value="UniProtKB-KW"/>
</dbReference>
<dbReference type="GO" id="GO:0042254">
    <property type="term" value="P:ribosome biogenesis"/>
    <property type="evidence" value="ECO:0007669"/>
    <property type="project" value="UniProtKB-KW"/>
</dbReference>
<dbReference type="CDD" id="cd16332">
    <property type="entry name" value="Prp-like"/>
    <property type="match status" value="1"/>
</dbReference>
<dbReference type="Gene3D" id="3.30.70.1490">
    <property type="entry name" value="Cysteine protease Prp"/>
    <property type="match status" value="1"/>
</dbReference>
<dbReference type="InterPro" id="IPR007422">
    <property type="entry name" value="Peptidase_Prp"/>
</dbReference>
<dbReference type="InterPro" id="IPR036764">
    <property type="entry name" value="Peptidase_Prp_sf"/>
</dbReference>
<dbReference type="PANTHER" id="PTHR39178">
    <property type="entry name" value="HYPOTHETICAL RIBOSOME-ASSOCIATED PROTEIN"/>
    <property type="match status" value="1"/>
</dbReference>
<dbReference type="PANTHER" id="PTHR39178:SF1">
    <property type="entry name" value="RIBOSOMAL-PROCESSING CYSTEINE PROTEASE PRP"/>
    <property type="match status" value="1"/>
</dbReference>
<dbReference type="Pfam" id="PF04327">
    <property type="entry name" value="Peptidase_Prp"/>
    <property type="match status" value="1"/>
</dbReference>
<dbReference type="SUPFAM" id="SSF118010">
    <property type="entry name" value="TM1457-like"/>
    <property type="match status" value="1"/>
</dbReference>
<proteinExistence type="evidence at protein level"/>
<keyword id="KW-0002">3D-structure</keyword>
<keyword id="KW-0378">Hydrolase</keyword>
<keyword id="KW-0645">Protease</keyword>
<keyword id="KW-0690">Ribosome biogenesis</keyword>
<keyword id="KW-0788">Thiol protease</keyword>
<protein>
    <recommendedName>
        <fullName evidence="1">Ribosomal processing cysteine protease Prp</fullName>
        <shortName evidence="1">Prp</shortName>
        <ecNumber evidence="1">3.4.22.-</ecNumber>
    </recommendedName>
</protein>
<reference evidence="4" key="1">
    <citation type="journal article" date="2001" name="Lancet">
        <title>Whole genome sequencing of meticillin-resistant Staphylococcus aureus.</title>
        <authorList>
            <person name="Kuroda M."/>
            <person name="Ohta T."/>
            <person name="Uchiyama I."/>
            <person name="Baba T."/>
            <person name="Yuzawa H."/>
            <person name="Kobayashi I."/>
            <person name="Cui L."/>
            <person name="Oguchi A."/>
            <person name="Aoki K."/>
            <person name="Nagai Y."/>
            <person name="Lian J.-Q."/>
            <person name="Ito T."/>
            <person name="Kanamori M."/>
            <person name="Matsumaru H."/>
            <person name="Maruyama A."/>
            <person name="Murakami H."/>
            <person name="Hosoyama A."/>
            <person name="Mizutani-Ui Y."/>
            <person name="Takahashi N.K."/>
            <person name="Sawano T."/>
            <person name="Inoue R."/>
            <person name="Kaito C."/>
            <person name="Sekimizu K."/>
            <person name="Hirakawa H."/>
            <person name="Kuhara S."/>
            <person name="Goto S."/>
            <person name="Yabuzaki J."/>
            <person name="Kanehisa M."/>
            <person name="Yamashita A."/>
            <person name="Oshima K."/>
            <person name="Furuya K."/>
            <person name="Yoshino C."/>
            <person name="Shiba T."/>
            <person name="Hattori M."/>
            <person name="Ogasawara N."/>
            <person name="Hayashi H."/>
            <person name="Hiramatsu K."/>
        </authorList>
    </citation>
    <scope>NUCLEOTIDE SEQUENCE [LARGE SCALE GENOMIC DNA]</scope>
    <source>
        <strain>Mu50 / ATCC 700699</strain>
    </source>
</reference>
<reference key="2">
    <citation type="journal article" date="2015" name="Acta Crystallogr. D">
        <title>The structure of SAV1646 from Staphylococcus aureus belonging to a new `ribosome-associated' subfamily of bacterial proteins.</title>
        <authorList>
            <person name="Chirgadze Y.N."/>
            <person name="Clarke T.E."/>
            <person name="Romanov V."/>
            <person name="Kisselman G."/>
            <person name="Wu-Brown J."/>
            <person name="Soloveychik M."/>
            <person name="Chan T.S."/>
            <person name="Gordon R.D."/>
            <person name="Battaile K.P."/>
            <person name="Pai E.F."/>
            <person name="Chirgadze N.Y."/>
        </authorList>
    </citation>
    <scope>X-RAY CRYSTALLOGRAPHY (1.73 ANGSTROMS)</scope>
    <scope>SUBUNIT</scope>
    <source>
        <strain>Mu50 / ATCC 700699</strain>
    </source>
</reference>
<feature type="chain" id="PRO_0000459839" description="Ribosomal processing cysteine protease Prp">
    <location>
        <begin position="1"/>
        <end position="106"/>
    </location>
</feature>
<feature type="active site" description="Proton donor" evidence="1">
    <location>
        <position position="22"/>
    </location>
</feature>
<feature type="active site" description="Nucleophile" evidence="1">
    <location>
        <position position="34"/>
    </location>
</feature>
<feature type="strand" evidence="5">
    <location>
        <begin position="2"/>
        <end position="8"/>
    </location>
</feature>
<feature type="strand" evidence="5">
    <location>
        <begin position="14"/>
        <end position="20"/>
    </location>
</feature>
<feature type="helix" evidence="5">
    <location>
        <begin position="36"/>
        <end position="51"/>
    </location>
</feature>
<feature type="strand" evidence="5">
    <location>
        <begin position="57"/>
        <end position="61"/>
    </location>
</feature>
<feature type="helix" evidence="5">
    <location>
        <begin position="62"/>
        <end position="64"/>
    </location>
</feature>
<feature type="strand" evidence="5">
    <location>
        <begin position="66"/>
        <end position="70"/>
    </location>
</feature>
<feature type="helix" evidence="5">
    <location>
        <begin position="77"/>
        <end position="96"/>
    </location>
</feature>
<feature type="strand" evidence="5">
    <location>
        <begin position="101"/>
        <end position="106"/>
    </location>
</feature>
<sequence>MITVDITVNDEGKVTDVIMDGHADHGEYGHDIVCAGASAVLFGSVNAIIGLTSERPDINYDDNGGHFHIRSVDTNNDEAQLILQTMLVSLQTIEEEYNENIRLNYK</sequence>